<comment type="function">
    <text evidence="1">Excises uracil residues from the DNA which can arise as a result of misincorporation of dUMP residues by DNA polymerase or due to deamination of cytosine.</text>
</comment>
<comment type="catalytic activity">
    <reaction evidence="1">
        <text>Hydrolyzes single-stranded DNA or mismatched double-stranded DNA and polynucleotides, releasing free uracil.</text>
        <dbReference type="EC" id="3.2.2.27"/>
    </reaction>
</comment>
<comment type="subcellular location">
    <subcellularLocation>
        <location evidence="1">Cytoplasm</location>
    </subcellularLocation>
</comment>
<comment type="similarity">
    <text evidence="1">Belongs to the uracil-DNA glycosylase (UDG) superfamily. UNG family.</text>
</comment>
<protein>
    <recommendedName>
        <fullName evidence="1">Uracil-DNA glycosylase</fullName>
        <shortName evidence="1">UDG</shortName>
        <ecNumber evidence="1">3.2.2.27</ecNumber>
    </recommendedName>
</protein>
<name>UNG_STRMU</name>
<feature type="chain" id="PRO_0000176151" description="Uracil-DNA glycosylase">
    <location>
        <begin position="1"/>
        <end position="217"/>
    </location>
</feature>
<feature type="active site" description="Proton acceptor" evidence="1">
    <location>
        <position position="62"/>
    </location>
</feature>
<proteinExistence type="inferred from homology"/>
<dbReference type="EC" id="3.2.2.27" evidence="1"/>
<dbReference type="EMBL" id="AE014133">
    <property type="protein sequence ID" value="AAN58900.1"/>
    <property type="molecule type" value="Genomic_DNA"/>
</dbReference>
<dbReference type="RefSeq" id="NP_721594.1">
    <property type="nucleotide sequence ID" value="NC_004350.2"/>
</dbReference>
<dbReference type="RefSeq" id="WP_002263271.1">
    <property type="nucleotide sequence ID" value="NC_004350.2"/>
</dbReference>
<dbReference type="SMR" id="Q8DTV8"/>
<dbReference type="STRING" id="210007.SMU_1215"/>
<dbReference type="KEGG" id="smu:SMU_1215"/>
<dbReference type="PATRIC" id="fig|210007.7.peg.1088"/>
<dbReference type="eggNOG" id="COG0692">
    <property type="taxonomic scope" value="Bacteria"/>
</dbReference>
<dbReference type="HOGENOM" id="CLU_032162_3_0_9"/>
<dbReference type="OrthoDB" id="9804372at2"/>
<dbReference type="PhylomeDB" id="Q8DTV8"/>
<dbReference type="Proteomes" id="UP000002512">
    <property type="component" value="Chromosome"/>
</dbReference>
<dbReference type="GO" id="GO:0005737">
    <property type="term" value="C:cytoplasm"/>
    <property type="evidence" value="ECO:0007669"/>
    <property type="project" value="UniProtKB-SubCell"/>
</dbReference>
<dbReference type="GO" id="GO:0004844">
    <property type="term" value="F:uracil DNA N-glycosylase activity"/>
    <property type="evidence" value="ECO:0007669"/>
    <property type="project" value="UniProtKB-UniRule"/>
</dbReference>
<dbReference type="GO" id="GO:0097510">
    <property type="term" value="P:base-excision repair, AP site formation via deaminated base removal"/>
    <property type="evidence" value="ECO:0007669"/>
    <property type="project" value="TreeGrafter"/>
</dbReference>
<dbReference type="CDD" id="cd10027">
    <property type="entry name" value="UDG-F1-like"/>
    <property type="match status" value="1"/>
</dbReference>
<dbReference type="FunFam" id="3.40.470.10:FF:000008">
    <property type="entry name" value="Uracil-DNA glycosylase"/>
    <property type="match status" value="1"/>
</dbReference>
<dbReference type="Gene3D" id="3.40.470.10">
    <property type="entry name" value="Uracil-DNA glycosylase-like domain"/>
    <property type="match status" value="1"/>
</dbReference>
<dbReference type="HAMAP" id="MF_00148">
    <property type="entry name" value="UDG"/>
    <property type="match status" value="1"/>
</dbReference>
<dbReference type="InterPro" id="IPR002043">
    <property type="entry name" value="UDG_fam1"/>
</dbReference>
<dbReference type="InterPro" id="IPR018085">
    <property type="entry name" value="Ura-DNA_Glyclase_AS"/>
</dbReference>
<dbReference type="InterPro" id="IPR005122">
    <property type="entry name" value="Uracil-DNA_glycosylase-like"/>
</dbReference>
<dbReference type="InterPro" id="IPR036895">
    <property type="entry name" value="Uracil-DNA_glycosylase-like_sf"/>
</dbReference>
<dbReference type="NCBIfam" id="NF003588">
    <property type="entry name" value="PRK05254.1-1"/>
    <property type="match status" value="1"/>
</dbReference>
<dbReference type="NCBIfam" id="NF003589">
    <property type="entry name" value="PRK05254.1-2"/>
    <property type="match status" value="1"/>
</dbReference>
<dbReference type="NCBIfam" id="NF003591">
    <property type="entry name" value="PRK05254.1-4"/>
    <property type="match status" value="1"/>
</dbReference>
<dbReference type="NCBIfam" id="NF003592">
    <property type="entry name" value="PRK05254.1-5"/>
    <property type="match status" value="1"/>
</dbReference>
<dbReference type="NCBIfam" id="TIGR00628">
    <property type="entry name" value="ung"/>
    <property type="match status" value="1"/>
</dbReference>
<dbReference type="PANTHER" id="PTHR11264">
    <property type="entry name" value="URACIL-DNA GLYCOSYLASE"/>
    <property type="match status" value="1"/>
</dbReference>
<dbReference type="PANTHER" id="PTHR11264:SF0">
    <property type="entry name" value="URACIL-DNA GLYCOSYLASE"/>
    <property type="match status" value="1"/>
</dbReference>
<dbReference type="Pfam" id="PF03167">
    <property type="entry name" value="UDG"/>
    <property type="match status" value="1"/>
</dbReference>
<dbReference type="SMART" id="SM00986">
    <property type="entry name" value="UDG"/>
    <property type="match status" value="1"/>
</dbReference>
<dbReference type="SMART" id="SM00987">
    <property type="entry name" value="UreE_C"/>
    <property type="match status" value="1"/>
</dbReference>
<dbReference type="SUPFAM" id="SSF52141">
    <property type="entry name" value="Uracil-DNA glycosylase-like"/>
    <property type="match status" value="1"/>
</dbReference>
<dbReference type="PROSITE" id="PS00130">
    <property type="entry name" value="U_DNA_GLYCOSYLASE"/>
    <property type="match status" value="1"/>
</dbReference>
<organism>
    <name type="scientific">Streptococcus mutans serotype c (strain ATCC 700610 / UA159)</name>
    <dbReference type="NCBI Taxonomy" id="210007"/>
    <lineage>
        <taxon>Bacteria</taxon>
        <taxon>Bacillati</taxon>
        <taxon>Bacillota</taxon>
        <taxon>Bacilli</taxon>
        <taxon>Lactobacillales</taxon>
        <taxon>Streptococcaceae</taxon>
        <taxon>Streptococcus</taxon>
    </lineage>
</organism>
<reference key="1">
    <citation type="journal article" date="2002" name="Proc. Natl. Acad. Sci. U.S.A.">
        <title>Genome sequence of Streptococcus mutans UA159, a cariogenic dental pathogen.</title>
        <authorList>
            <person name="Ajdic D.J."/>
            <person name="McShan W.M."/>
            <person name="McLaughlin R.E."/>
            <person name="Savic G."/>
            <person name="Chang J."/>
            <person name="Carson M.B."/>
            <person name="Primeaux C."/>
            <person name="Tian R."/>
            <person name="Kenton S."/>
            <person name="Jia H.G."/>
            <person name="Lin S.P."/>
            <person name="Qian Y."/>
            <person name="Li S."/>
            <person name="Zhu H."/>
            <person name="Najar F.Z."/>
            <person name="Lai H."/>
            <person name="White J."/>
            <person name="Roe B.A."/>
            <person name="Ferretti J.J."/>
        </authorList>
    </citation>
    <scope>NUCLEOTIDE SEQUENCE [LARGE SCALE GENOMIC DNA]</scope>
    <source>
        <strain>ATCC 700610 / UA159</strain>
    </source>
</reference>
<sequence length="217" mass="24212">MEHSAWHDLIKKELPEGYFAQINHFMNEVYAQGVIYPPRDKVFNAIQTTPLDKVKVVIIGQDPYHGPNQAQGLSFSVPDQVPAPPSLQNILKELADDIGQKQSHDLTSWAKQGVLLLNASLTVPEHQANAHANGIWEPFTDAVIKVVNQKETPVVFILWGGFARKKKALITNSIHHIIESPHPSPLSAHRGFFGSKPFSQTNHFLVAQGLEPIDWLK</sequence>
<accession>Q8DTV8</accession>
<gene>
    <name evidence="1" type="primary">ung</name>
    <name type="ordered locus">SMU_1215</name>
</gene>
<keyword id="KW-0963">Cytoplasm</keyword>
<keyword id="KW-0227">DNA damage</keyword>
<keyword id="KW-0234">DNA repair</keyword>
<keyword id="KW-0378">Hydrolase</keyword>
<keyword id="KW-1185">Reference proteome</keyword>
<evidence type="ECO:0000255" key="1">
    <source>
        <dbReference type="HAMAP-Rule" id="MF_00148"/>
    </source>
</evidence>